<evidence type="ECO:0000250" key="1"/>
<evidence type="ECO:0000305" key="2"/>
<gene>
    <name type="primary">rluE</name>
    <name type="ordered locus">HI_0694</name>
</gene>
<comment type="function">
    <text evidence="1">Responsible for synthesis of pseudouridine from uracil-2457 in 23S ribosomal RNA.</text>
</comment>
<comment type="catalytic activity">
    <reaction>
        <text>uridine(2457) in 23S rRNA = pseudouridine(2457) in 23S rRNA</text>
        <dbReference type="Rhea" id="RHEA:38871"/>
        <dbReference type="Rhea" id="RHEA-COMP:10091"/>
        <dbReference type="Rhea" id="RHEA-COMP:10092"/>
        <dbReference type="ChEBI" id="CHEBI:65314"/>
        <dbReference type="ChEBI" id="CHEBI:65315"/>
        <dbReference type="EC" id="5.4.99.20"/>
    </reaction>
</comment>
<comment type="similarity">
    <text evidence="2">Belongs to the pseudouridine synthase RsuA family.</text>
</comment>
<organism>
    <name type="scientific">Haemophilus influenzae (strain ATCC 51907 / DSM 11121 / KW20 / Rd)</name>
    <dbReference type="NCBI Taxonomy" id="71421"/>
    <lineage>
        <taxon>Bacteria</taxon>
        <taxon>Pseudomonadati</taxon>
        <taxon>Pseudomonadota</taxon>
        <taxon>Gammaproteobacteria</taxon>
        <taxon>Pasteurellales</taxon>
        <taxon>Pasteurellaceae</taxon>
        <taxon>Haemophilus</taxon>
    </lineage>
</organism>
<accession>P44827</accession>
<reference key="1">
    <citation type="journal article" date="1995" name="Science">
        <title>Whole-genome random sequencing and assembly of Haemophilus influenzae Rd.</title>
        <authorList>
            <person name="Fleischmann R.D."/>
            <person name="Adams M.D."/>
            <person name="White O."/>
            <person name="Clayton R.A."/>
            <person name="Kirkness E.F."/>
            <person name="Kerlavage A.R."/>
            <person name="Bult C.J."/>
            <person name="Tomb J.-F."/>
            <person name="Dougherty B.A."/>
            <person name="Merrick J.M."/>
            <person name="McKenney K."/>
            <person name="Sutton G.G."/>
            <person name="FitzHugh W."/>
            <person name="Fields C.A."/>
            <person name="Gocayne J.D."/>
            <person name="Scott J.D."/>
            <person name="Shirley R."/>
            <person name="Liu L.-I."/>
            <person name="Glodek A."/>
            <person name="Kelley J.M."/>
            <person name="Weidman J.F."/>
            <person name="Phillips C.A."/>
            <person name="Spriggs T."/>
            <person name="Hedblom E."/>
            <person name="Cotton M.D."/>
            <person name="Utterback T.R."/>
            <person name="Hanna M.C."/>
            <person name="Nguyen D.T."/>
            <person name="Saudek D.M."/>
            <person name="Brandon R.C."/>
            <person name="Fine L.D."/>
            <person name="Fritchman J.L."/>
            <person name="Fuhrmann J.L."/>
            <person name="Geoghagen N.S.M."/>
            <person name="Gnehm C.L."/>
            <person name="McDonald L.A."/>
            <person name="Small K.V."/>
            <person name="Fraser C.M."/>
            <person name="Smith H.O."/>
            <person name="Venter J.C."/>
        </authorList>
    </citation>
    <scope>NUCLEOTIDE SEQUENCE [LARGE SCALE GENOMIC DNA]</scope>
    <source>
        <strain>ATCC 51907 / DSM 11121 / KW20 / Rd</strain>
    </source>
</reference>
<name>RLUE_HAEIN</name>
<sequence length="240" mass="27464">MMLQAFQNRNHKLMKKNFSAGKLPSKGKSAVNFHRTFKPKLKPKTLSLDETKVVLFNKPFDVLTQFTDEQGRATLKDFISIPNVYAAGRLDRDSEGLLILTNNGELQHRLADPKFKTEKTYWVQVEGIPEETDLAQLRKGVELKDGVTKSAKVRLISEPNLWERNPPIRERKNIPTSWLEIKISEGRNRQVRRMTAHIGFPTLRLVRVSMGLLSINGLENGSFRLLSLDEIKALFQTVKL</sequence>
<dbReference type="EC" id="5.4.99.20"/>
<dbReference type="EMBL" id="L42023">
    <property type="protein sequence ID" value="AAC22354.1"/>
    <property type="molecule type" value="Genomic_DNA"/>
</dbReference>
<dbReference type="PIR" id="I64156">
    <property type="entry name" value="I64156"/>
</dbReference>
<dbReference type="RefSeq" id="NP_438854.1">
    <property type="nucleotide sequence ID" value="NC_000907.1"/>
</dbReference>
<dbReference type="SMR" id="P44827"/>
<dbReference type="STRING" id="71421.HI_0694"/>
<dbReference type="EnsemblBacteria" id="AAC22354">
    <property type="protein sequence ID" value="AAC22354"/>
    <property type="gene ID" value="HI_0694"/>
</dbReference>
<dbReference type="KEGG" id="hin:HI_0694"/>
<dbReference type="PATRIC" id="fig|71421.8.peg.726"/>
<dbReference type="eggNOG" id="COG1187">
    <property type="taxonomic scope" value="Bacteria"/>
</dbReference>
<dbReference type="HOGENOM" id="CLU_024979_8_0_6"/>
<dbReference type="OrthoDB" id="9807213at2"/>
<dbReference type="PhylomeDB" id="P44827"/>
<dbReference type="BioCyc" id="HINF71421:G1GJ1-729-MONOMER"/>
<dbReference type="Proteomes" id="UP000000579">
    <property type="component" value="Chromosome"/>
</dbReference>
<dbReference type="GO" id="GO:0160137">
    <property type="term" value="F:23S rRNA pseudouridine(2457) synthase activity"/>
    <property type="evidence" value="ECO:0007669"/>
    <property type="project" value="UniProtKB-EC"/>
</dbReference>
<dbReference type="GO" id="GO:0003723">
    <property type="term" value="F:RNA binding"/>
    <property type="evidence" value="ECO:0007669"/>
    <property type="project" value="InterPro"/>
</dbReference>
<dbReference type="GO" id="GO:0001522">
    <property type="term" value="P:pseudouridine synthesis"/>
    <property type="evidence" value="ECO:0007669"/>
    <property type="project" value="InterPro"/>
</dbReference>
<dbReference type="GO" id="GO:0006364">
    <property type="term" value="P:rRNA processing"/>
    <property type="evidence" value="ECO:0007669"/>
    <property type="project" value="UniProtKB-KW"/>
</dbReference>
<dbReference type="CDD" id="cd02566">
    <property type="entry name" value="PseudoU_synth_RluE"/>
    <property type="match status" value="1"/>
</dbReference>
<dbReference type="Gene3D" id="3.30.70.1560">
    <property type="entry name" value="Alpha-L RNA-binding motif"/>
    <property type="match status" value="1"/>
</dbReference>
<dbReference type="Gene3D" id="3.30.70.580">
    <property type="entry name" value="Pseudouridine synthase I, catalytic domain, N-terminal subdomain"/>
    <property type="match status" value="1"/>
</dbReference>
<dbReference type="InterPro" id="IPR042092">
    <property type="entry name" value="PsdUridine_s_RsuA/RluB/E/F_cat"/>
</dbReference>
<dbReference type="InterPro" id="IPR020103">
    <property type="entry name" value="PsdUridine_synth_cat_dom_sf"/>
</dbReference>
<dbReference type="InterPro" id="IPR006145">
    <property type="entry name" value="PsdUridine_synth_RsuA/RluA"/>
</dbReference>
<dbReference type="InterPro" id="IPR000748">
    <property type="entry name" value="PsdUridine_synth_RsuA/RluB/E/F"/>
</dbReference>
<dbReference type="InterPro" id="IPR018496">
    <property type="entry name" value="PsdUridine_synth_RsuA/RluB_CS"/>
</dbReference>
<dbReference type="InterPro" id="IPR050343">
    <property type="entry name" value="RsuA_PseudoU_synthase"/>
</dbReference>
<dbReference type="InterPro" id="IPR020094">
    <property type="entry name" value="TruA/RsuA/RluB/E/F_N"/>
</dbReference>
<dbReference type="NCBIfam" id="TIGR00093">
    <property type="entry name" value="pseudouridine synthase"/>
    <property type="match status" value="1"/>
</dbReference>
<dbReference type="PANTHER" id="PTHR47683">
    <property type="entry name" value="PSEUDOURIDINE SYNTHASE FAMILY PROTEIN-RELATED"/>
    <property type="match status" value="1"/>
</dbReference>
<dbReference type="PANTHER" id="PTHR47683:SF2">
    <property type="entry name" value="RNA-BINDING S4 DOMAIN-CONTAINING PROTEIN"/>
    <property type="match status" value="1"/>
</dbReference>
<dbReference type="Pfam" id="PF00849">
    <property type="entry name" value="PseudoU_synth_2"/>
    <property type="match status" value="1"/>
</dbReference>
<dbReference type="SUPFAM" id="SSF55120">
    <property type="entry name" value="Pseudouridine synthase"/>
    <property type="match status" value="1"/>
</dbReference>
<dbReference type="PROSITE" id="PS01149">
    <property type="entry name" value="PSI_RSU"/>
    <property type="match status" value="1"/>
</dbReference>
<feature type="chain" id="PRO_0000100004" description="Ribosomal large subunit pseudouridine synthase E">
    <location>
        <begin position="1"/>
        <end position="240"/>
    </location>
</feature>
<feature type="active site" description="Nucleophile" evidence="1">
    <location>
        <position position="91"/>
    </location>
</feature>
<keyword id="KW-0413">Isomerase</keyword>
<keyword id="KW-1185">Reference proteome</keyword>
<keyword id="KW-0698">rRNA processing</keyword>
<protein>
    <recommendedName>
        <fullName>Ribosomal large subunit pseudouridine synthase E</fullName>
        <ecNumber>5.4.99.20</ecNumber>
    </recommendedName>
    <alternativeName>
        <fullName>rRNA pseudouridylate synthase E</fullName>
    </alternativeName>
    <alternativeName>
        <fullName>rRNA-uridine isomerase E</fullName>
    </alternativeName>
</protein>
<proteinExistence type="inferred from homology"/>